<organism>
    <name type="scientific">Monkeypox virus</name>
    <dbReference type="NCBI Taxonomy" id="10244"/>
    <lineage>
        <taxon>Viruses</taxon>
        <taxon>Varidnaviria</taxon>
        <taxon>Bamfordvirae</taxon>
        <taxon>Nucleocytoviricota</taxon>
        <taxon>Pokkesviricetes</taxon>
        <taxon>Chitovirales</taxon>
        <taxon>Poxviridae</taxon>
        <taxon>Chordopoxvirinae</taxon>
        <taxon>Orthopoxvirus</taxon>
    </lineage>
</organism>
<organismHost>
    <name type="scientific">Cynomys gunnisoni</name>
    <name type="common">Gunnison's prairie dog</name>
    <name type="synonym">Spermophilus gunnisoni</name>
    <dbReference type="NCBI Taxonomy" id="45479"/>
</organismHost>
<organismHost>
    <name type="scientific">Cynomys leucurus</name>
    <name type="common">White-tailed prairie dog</name>
    <dbReference type="NCBI Taxonomy" id="99825"/>
</organismHost>
<organismHost>
    <name type="scientific">Cynomys ludovicianus</name>
    <name type="common">Black-tailed prairie dog</name>
    <dbReference type="NCBI Taxonomy" id="45480"/>
</organismHost>
<organismHost>
    <name type="scientific">Cynomys mexicanus</name>
    <name type="common">Mexican prairie dog</name>
    <dbReference type="NCBI Taxonomy" id="99826"/>
</organismHost>
<organismHost>
    <name type="scientific">Cynomys parvidens</name>
    <name type="common">Utah prairie dog</name>
    <dbReference type="NCBI Taxonomy" id="99827"/>
</organismHost>
<organismHost>
    <name type="scientific">Gliridae</name>
    <name type="common">dormice</name>
    <dbReference type="NCBI Taxonomy" id="30650"/>
</organismHost>
<organismHost>
    <name type="scientific">Heliosciurus ruwenzorii</name>
    <name type="common">Ruwenzori sun squirrel</name>
    <dbReference type="NCBI Taxonomy" id="226685"/>
</organismHost>
<organismHost>
    <name type="scientific">Homo sapiens</name>
    <name type="common">Human</name>
    <dbReference type="NCBI Taxonomy" id="9606"/>
</organismHost>
<organismHost>
    <name type="scientific">Mus musculus</name>
    <name type="common">Mouse</name>
    <dbReference type="NCBI Taxonomy" id="10090"/>
</organismHost>
<dbReference type="EC" id="2.7.11.1" evidence="1"/>
<dbReference type="EMBL" id="MT903340">
    <property type="protein sequence ID" value="QNP12910.1"/>
    <property type="molecule type" value="Genomic_DNA"/>
</dbReference>
<dbReference type="RefSeq" id="YP_010377037.1">
    <property type="nucleotide sequence ID" value="NC_063383.1"/>
</dbReference>
<dbReference type="GeneID" id="72551450"/>
<dbReference type="Proteomes" id="UP000516359">
    <property type="component" value="Genome"/>
</dbReference>
<dbReference type="GO" id="GO:0044165">
    <property type="term" value="C:host cell endoplasmic reticulum"/>
    <property type="evidence" value="ECO:0007669"/>
    <property type="project" value="UniProtKB-SubCell"/>
</dbReference>
<dbReference type="GO" id="GO:0044172">
    <property type="term" value="C:host cell endoplasmic reticulum-Golgi intermediate compartment"/>
    <property type="evidence" value="ECO:0007669"/>
    <property type="project" value="UniProtKB-SubCell"/>
</dbReference>
<dbReference type="GO" id="GO:0005524">
    <property type="term" value="F:ATP binding"/>
    <property type="evidence" value="ECO:0007669"/>
    <property type="project" value="UniProtKB-KW"/>
</dbReference>
<dbReference type="GO" id="GO:0004674">
    <property type="term" value="F:protein serine/threonine kinase activity"/>
    <property type="evidence" value="ECO:0007669"/>
    <property type="project" value="UniProtKB-KW"/>
</dbReference>
<dbReference type="InterPro" id="IPR008790">
    <property type="entry name" value="Poxvirus_ser/thr_kinase"/>
</dbReference>
<dbReference type="InterPro" id="IPR000719">
    <property type="entry name" value="Prot_kinase_dom"/>
</dbReference>
<dbReference type="InterPro" id="IPR008271">
    <property type="entry name" value="Ser/Thr_kinase_AS"/>
</dbReference>
<dbReference type="Pfam" id="PF05445">
    <property type="entry name" value="Pox_ser-thr_kin"/>
    <property type="match status" value="1"/>
</dbReference>
<dbReference type="PIRSF" id="PIRSF015695">
    <property type="entry name" value="STPK_F10L"/>
    <property type="match status" value="1"/>
</dbReference>
<dbReference type="PROSITE" id="PS50011">
    <property type="entry name" value="PROTEIN_KINASE_DOM"/>
    <property type="match status" value="1"/>
</dbReference>
<dbReference type="PROSITE" id="PS00108">
    <property type="entry name" value="PROTEIN_KINASE_ST"/>
    <property type="match status" value="1"/>
</dbReference>
<keyword id="KW-0067">ATP-binding</keyword>
<keyword id="KW-1038">Host endoplasmic reticulum</keyword>
<keyword id="KW-0418">Kinase</keyword>
<keyword id="KW-0426">Late protein</keyword>
<keyword id="KW-0547">Nucleotide-binding</keyword>
<keyword id="KW-0597">Phosphoprotein</keyword>
<keyword id="KW-1185">Reference proteome</keyword>
<keyword id="KW-0723">Serine/threonine-protein kinase</keyword>
<keyword id="KW-0808">Transferase</keyword>
<gene>
    <name type="primary">OPG054</name>
    <name type="ORF">MPXVgp042</name>
</gene>
<reference key="1">
    <citation type="journal article" date="2022" name="J. Infect. Dis.">
        <title>Exportation of Monkeypox virus from the African continent.</title>
        <authorList>
            <person name="Mauldin M.R."/>
            <person name="McCollum A.M."/>
            <person name="Nakazawa Y.J."/>
            <person name="Mandra A."/>
            <person name="Whitehouse E.R."/>
            <person name="Davidson W."/>
            <person name="Zhao H."/>
            <person name="Gao J."/>
            <person name="Li Y."/>
            <person name="Doty J."/>
            <person name="Yinka-Ogunleye A."/>
            <person name="Akinpelu A."/>
            <person name="Aruna O."/>
            <person name="Naidoo D."/>
            <person name="Lewandowski K."/>
            <person name="Afrough B."/>
            <person name="Graham V."/>
            <person name="Aarons E."/>
            <person name="Hewson R."/>
            <person name="Vipond R."/>
            <person name="Dunning J."/>
            <person name="Chand M."/>
            <person name="Brown C."/>
            <person name="Cohen-Gihon I."/>
            <person name="Erez N."/>
            <person name="Shifman O."/>
            <person name="Israeli O."/>
            <person name="Sharon M."/>
            <person name="Schwartz E."/>
            <person name="Beth-Din A."/>
            <person name="Zvi A."/>
            <person name="Mak T.M."/>
            <person name="Ng Y.K."/>
            <person name="Cui L."/>
            <person name="Lin R.T.P."/>
            <person name="Olson V.A."/>
            <person name="Brooks T."/>
            <person name="Paran N."/>
            <person name="Ihekweazu C."/>
            <person name="Reynolds M.G."/>
        </authorList>
    </citation>
    <scope>NUCLEOTIDE SEQUENCE [LARGE SCALE GENOMIC DNA]</scope>
    <source>
        <strain>MPXV-M5312_HM12_Rivers</strain>
    </source>
</reference>
<sequence>MGVANDSSPEYQWMSPHRLSDTVILGDCLYFNNIMSQLDLHQNWAPSVRLLNYFKNFNKETLLKIEENDYINSSFFQQKDKRFYPINDDFYHISTGGYGIVFKIDNYVVKFVFEATKLYSPMETTAEFTVPKFLYNNLKGDEKKLIVCAWAMGLNYKLTFLHTLYKRVLHMLLLLIQTMDGQELSLRYSSKVFLKAFNERKDSIKFVKLLSHFYPAVINSNINVINYFNRMFHFFEHEKRTNYEYERGNIIIFPLALYSADKVDTELAIKLGFKSLVQYIKFIFLQMSLLYIKIYELPCCDNFLHADLKPDNILLFDSNEPIIIHLKNKKFVFNERIKSALNDFDFSQVAGIINKKIKNNFKVEHNWYYDFHFFVHTLLKTYPEIEKDIEFSTALEEFIMCTKTDCDKYRLKVSILHPISFLEKFIMRDIFSDWINGRN</sequence>
<accession>A0A7H0DN27</accession>
<evidence type="ECO:0000250" key="1">
    <source>
        <dbReference type="UniProtKB" id="Q89121"/>
    </source>
</evidence>
<evidence type="ECO:0000255" key="2">
    <source>
        <dbReference type="PIRNR" id="PIRNR015695"/>
    </source>
</evidence>
<evidence type="ECO:0000255" key="3">
    <source>
        <dbReference type="PROSITE-ProRule" id="PRU00159"/>
    </source>
</evidence>
<evidence type="ECO:0000255" key="4">
    <source>
        <dbReference type="PROSITE-ProRule" id="PRU10027"/>
    </source>
</evidence>
<feature type="chain" id="PRO_0000457647" description="Serine/threonine-protein kinase 2">
    <location>
        <begin position="1"/>
        <end position="439"/>
    </location>
</feature>
<feature type="domain" description="Protein kinase" evidence="3">
    <location>
        <begin position="87"/>
        <end position="439"/>
    </location>
</feature>
<feature type="active site" description="Proton acceptor" evidence="4">
    <location>
        <position position="307"/>
    </location>
</feature>
<feature type="binding site" evidence="3">
    <location>
        <begin position="93"/>
        <end position="101"/>
    </location>
    <ligand>
        <name>ATP</name>
        <dbReference type="ChEBI" id="CHEBI:30616"/>
    </ligand>
</feature>
<feature type="binding site" evidence="3">
    <location>
        <position position="117"/>
    </location>
    <ligand>
        <name>ATP</name>
        <dbReference type="ChEBI" id="CHEBI:30616"/>
    </ligand>
</feature>
<comment type="function">
    <text evidence="1">Essential serine-protein kinase involved in the early stage of virion morphogenesis.</text>
</comment>
<comment type="catalytic activity">
    <reaction evidence="2">
        <text>L-seryl-[protein] + ATP = O-phospho-L-seryl-[protein] + ADP + H(+)</text>
        <dbReference type="Rhea" id="RHEA:17989"/>
        <dbReference type="Rhea" id="RHEA-COMP:9863"/>
        <dbReference type="Rhea" id="RHEA-COMP:11604"/>
        <dbReference type="ChEBI" id="CHEBI:15378"/>
        <dbReference type="ChEBI" id="CHEBI:29999"/>
        <dbReference type="ChEBI" id="CHEBI:30616"/>
        <dbReference type="ChEBI" id="CHEBI:83421"/>
        <dbReference type="ChEBI" id="CHEBI:456216"/>
        <dbReference type="EC" id="2.7.11.1"/>
    </reaction>
</comment>
<comment type="catalytic activity">
    <reaction evidence="2">
        <text>L-threonyl-[protein] + ATP = O-phospho-L-threonyl-[protein] + ADP + H(+)</text>
        <dbReference type="Rhea" id="RHEA:46608"/>
        <dbReference type="Rhea" id="RHEA-COMP:11060"/>
        <dbReference type="Rhea" id="RHEA-COMP:11605"/>
        <dbReference type="ChEBI" id="CHEBI:15378"/>
        <dbReference type="ChEBI" id="CHEBI:30013"/>
        <dbReference type="ChEBI" id="CHEBI:30616"/>
        <dbReference type="ChEBI" id="CHEBI:61977"/>
        <dbReference type="ChEBI" id="CHEBI:456216"/>
        <dbReference type="EC" id="2.7.11.1"/>
    </reaction>
</comment>
<comment type="subcellular location">
    <subcellularLocation>
        <location evidence="1">Host endoplasmic reticulum</location>
    </subcellularLocation>
    <subcellularLocation>
        <location evidence="1">Host endoplasmic reticulum-Golgi intermediate compartment</location>
    </subcellularLocation>
</comment>
<comment type="induction">
    <text evidence="1">Expressed in the late phase of the viral replicative cycle.</text>
</comment>
<comment type="PTM">
    <text evidence="1">Phosphorylated in vivo. Autophosphorylated in vitro.</text>
</comment>
<comment type="similarity">
    <text evidence="3">Belongs to the protein kinase superfamily. Ser/Thr protein kinase family.</text>
</comment>
<proteinExistence type="inferred from homology"/>
<name>VPK2_MONPV</name>
<protein>
    <recommendedName>
        <fullName>Serine/threonine-protein kinase 2</fullName>
        <ecNumber evidence="1">2.7.11.1</ecNumber>
    </recommendedName>
</protein>